<reference key="1">
    <citation type="journal article" date="2008" name="Environ. Microbiol.">
        <title>The genome of Erwinia tasmaniensis strain Et1/99, a non-pathogenic bacterium in the genus Erwinia.</title>
        <authorList>
            <person name="Kube M."/>
            <person name="Migdoll A.M."/>
            <person name="Mueller I."/>
            <person name="Kuhl H."/>
            <person name="Beck A."/>
            <person name="Reinhardt R."/>
            <person name="Geider K."/>
        </authorList>
    </citation>
    <scope>NUCLEOTIDE SEQUENCE [LARGE SCALE GENOMIC DNA]</scope>
    <source>
        <strain>DSM 17950 / CFBP 7177 / CIP 109463 / NCPPB 4357 / Et1/99</strain>
    </source>
</reference>
<organism>
    <name type="scientific">Erwinia tasmaniensis (strain DSM 17950 / CFBP 7177 / CIP 109463 / NCPPB 4357 / Et1/99)</name>
    <dbReference type="NCBI Taxonomy" id="465817"/>
    <lineage>
        <taxon>Bacteria</taxon>
        <taxon>Pseudomonadati</taxon>
        <taxon>Pseudomonadota</taxon>
        <taxon>Gammaproteobacteria</taxon>
        <taxon>Enterobacterales</taxon>
        <taxon>Erwiniaceae</taxon>
        <taxon>Erwinia</taxon>
    </lineage>
</organism>
<keyword id="KW-0488">Methylation</keyword>
<keyword id="KW-1185">Reference proteome</keyword>
<keyword id="KW-0687">Ribonucleoprotein</keyword>
<keyword id="KW-0689">Ribosomal protein</keyword>
<keyword id="KW-0694">RNA-binding</keyword>
<keyword id="KW-0699">rRNA-binding</keyword>
<feature type="chain" id="PRO_1000195626" description="Large ribosomal subunit protein uL11">
    <location>
        <begin position="1"/>
        <end position="142"/>
    </location>
</feature>
<evidence type="ECO:0000255" key="1">
    <source>
        <dbReference type="HAMAP-Rule" id="MF_00736"/>
    </source>
</evidence>
<evidence type="ECO:0000305" key="2"/>
<accession>B2VG92</accession>
<sequence>MAKKVQAYVKLQVAAGMANPSPPVGPALGQQGVNIMEFCKAFNAKTESLEKGLPTPVVITVYSDRSFTFVTKTPPAAVLLKKAAGIKSGSGKPNKDKVGKVSRAQVREIAETKAADMTGADIEAMTRSIEGTARSMGLVVED</sequence>
<comment type="function">
    <text evidence="1">Forms part of the ribosomal stalk which helps the ribosome interact with GTP-bound translation factors.</text>
</comment>
<comment type="subunit">
    <text evidence="1">Part of the ribosomal stalk of the 50S ribosomal subunit. Interacts with L10 and the large rRNA to form the base of the stalk. L10 forms an elongated spine to which L12 dimers bind in a sequential fashion forming a multimeric L10(L12)X complex.</text>
</comment>
<comment type="PTM">
    <text evidence="1">One or more lysine residues are methylated.</text>
</comment>
<comment type="similarity">
    <text evidence="1">Belongs to the universal ribosomal protein uL11 family.</text>
</comment>
<dbReference type="EMBL" id="CU468135">
    <property type="protein sequence ID" value="CAO95197.1"/>
    <property type="molecule type" value="Genomic_DNA"/>
</dbReference>
<dbReference type="RefSeq" id="WP_012439921.1">
    <property type="nucleotide sequence ID" value="NC_010694.1"/>
</dbReference>
<dbReference type="SMR" id="B2VG92"/>
<dbReference type="STRING" id="465817.ETA_01510"/>
<dbReference type="GeneID" id="89476578"/>
<dbReference type="KEGG" id="eta:ETA_01510"/>
<dbReference type="eggNOG" id="COG0080">
    <property type="taxonomic scope" value="Bacteria"/>
</dbReference>
<dbReference type="HOGENOM" id="CLU_074237_2_0_6"/>
<dbReference type="OrthoDB" id="9802408at2"/>
<dbReference type="Proteomes" id="UP000001726">
    <property type="component" value="Chromosome"/>
</dbReference>
<dbReference type="GO" id="GO:0022625">
    <property type="term" value="C:cytosolic large ribosomal subunit"/>
    <property type="evidence" value="ECO:0007669"/>
    <property type="project" value="TreeGrafter"/>
</dbReference>
<dbReference type="GO" id="GO:0070180">
    <property type="term" value="F:large ribosomal subunit rRNA binding"/>
    <property type="evidence" value="ECO:0007669"/>
    <property type="project" value="UniProtKB-UniRule"/>
</dbReference>
<dbReference type="GO" id="GO:0003735">
    <property type="term" value="F:structural constituent of ribosome"/>
    <property type="evidence" value="ECO:0007669"/>
    <property type="project" value="InterPro"/>
</dbReference>
<dbReference type="GO" id="GO:0006412">
    <property type="term" value="P:translation"/>
    <property type="evidence" value="ECO:0007669"/>
    <property type="project" value="UniProtKB-UniRule"/>
</dbReference>
<dbReference type="CDD" id="cd00349">
    <property type="entry name" value="Ribosomal_L11"/>
    <property type="match status" value="1"/>
</dbReference>
<dbReference type="FunFam" id="1.10.10.250:FF:000001">
    <property type="entry name" value="50S ribosomal protein L11"/>
    <property type="match status" value="1"/>
</dbReference>
<dbReference type="FunFam" id="3.30.1550.10:FF:000001">
    <property type="entry name" value="50S ribosomal protein L11"/>
    <property type="match status" value="1"/>
</dbReference>
<dbReference type="Gene3D" id="1.10.10.250">
    <property type="entry name" value="Ribosomal protein L11, C-terminal domain"/>
    <property type="match status" value="1"/>
</dbReference>
<dbReference type="Gene3D" id="3.30.1550.10">
    <property type="entry name" value="Ribosomal protein L11/L12, N-terminal domain"/>
    <property type="match status" value="1"/>
</dbReference>
<dbReference type="HAMAP" id="MF_00736">
    <property type="entry name" value="Ribosomal_uL11"/>
    <property type="match status" value="1"/>
</dbReference>
<dbReference type="InterPro" id="IPR000911">
    <property type="entry name" value="Ribosomal_uL11"/>
</dbReference>
<dbReference type="InterPro" id="IPR006519">
    <property type="entry name" value="Ribosomal_uL11_bac-typ"/>
</dbReference>
<dbReference type="InterPro" id="IPR020783">
    <property type="entry name" value="Ribosomal_uL11_C"/>
</dbReference>
<dbReference type="InterPro" id="IPR036769">
    <property type="entry name" value="Ribosomal_uL11_C_sf"/>
</dbReference>
<dbReference type="InterPro" id="IPR020785">
    <property type="entry name" value="Ribosomal_uL11_CS"/>
</dbReference>
<dbReference type="InterPro" id="IPR020784">
    <property type="entry name" value="Ribosomal_uL11_N"/>
</dbReference>
<dbReference type="InterPro" id="IPR036796">
    <property type="entry name" value="Ribosomal_uL11_N_sf"/>
</dbReference>
<dbReference type="NCBIfam" id="TIGR01632">
    <property type="entry name" value="L11_bact"/>
    <property type="match status" value="1"/>
</dbReference>
<dbReference type="PANTHER" id="PTHR11661">
    <property type="entry name" value="60S RIBOSOMAL PROTEIN L12"/>
    <property type="match status" value="1"/>
</dbReference>
<dbReference type="PANTHER" id="PTHR11661:SF1">
    <property type="entry name" value="LARGE RIBOSOMAL SUBUNIT PROTEIN UL11M"/>
    <property type="match status" value="1"/>
</dbReference>
<dbReference type="Pfam" id="PF00298">
    <property type="entry name" value="Ribosomal_L11"/>
    <property type="match status" value="1"/>
</dbReference>
<dbReference type="Pfam" id="PF03946">
    <property type="entry name" value="Ribosomal_L11_N"/>
    <property type="match status" value="1"/>
</dbReference>
<dbReference type="SMART" id="SM00649">
    <property type="entry name" value="RL11"/>
    <property type="match status" value="1"/>
</dbReference>
<dbReference type="SUPFAM" id="SSF54747">
    <property type="entry name" value="Ribosomal L11/L12e N-terminal domain"/>
    <property type="match status" value="1"/>
</dbReference>
<dbReference type="SUPFAM" id="SSF46906">
    <property type="entry name" value="Ribosomal protein L11, C-terminal domain"/>
    <property type="match status" value="1"/>
</dbReference>
<dbReference type="PROSITE" id="PS00359">
    <property type="entry name" value="RIBOSOMAL_L11"/>
    <property type="match status" value="1"/>
</dbReference>
<protein>
    <recommendedName>
        <fullName evidence="1">Large ribosomal subunit protein uL11</fullName>
    </recommendedName>
    <alternativeName>
        <fullName evidence="2">50S ribosomal protein L11</fullName>
    </alternativeName>
</protein>
<proteinExistence type="inferred from homology"/>
<name>RL11_ERWT9</name>
<gene>
    <name evidence="1" type="primary">rplK</name>
    <name type="ordered locus">ETA_01510</name>
</gene>